<evidence type="ECO:0000250" key="1"/>
<evidence type="ECO:0000256" key="2">
    <source>
        <dbReference type="SAM" id="MobiDB-lite"/>
    </source>
</evidence>
<evidence type="ECO:0000269" key="3">
    <source>
    </source>
</evidence>
<evidence type="ECO:0000305" key="4"/>
<evidence type="ECO:0000305" key="5">
    <source>
    </source>
</evidence>
<feature type="signal peptide" evidence="3">
    <location>
        <begin position="1"/>
        <end position="27"/>
    </location>
</feature>
<feature type="chain" id="PRO_0000320311" description="Probable transglycosylase SceD">
    <location>
        <begin position="28"/>
        <end position="231"/>
    </location>
</feature>
<feature type="region of interest" description="Disordered" evidence="2">
    <location>
        <begin position="103"/>
        <end position="153"/>
    </location>
</feature>
<feature type="compositionally biased region" description="Polar residues" evidence="2">
    <location>
        <begin position="103"/>
        <end position="116"/>
    </location>
</feature>
<feature type="compositionally biased region" description="Low complexity" evidence="2">
    <location>
        <begin position="119"/>
        <end position="137"/>
    </location>
</feature>
<feature type="compositionally biased region" description="Polar residues" evidence="2">
    <location>
        <begin position="138"/>
        <end position="153"/>
    </location>
</feature>
<sequence length="231" mass="24096">MKKTLLASSLAVGLGIVAGNAGHEAHASEADLNKASLAQMAQSNDQTLNQKPIEAGAYNYTFDYEGFTYHFESDGTHFAWNYHATGTNGADMSAQAPTTNNVAPSAVQANQVQSQEVEAPQNAQTQQPQASTSNNSQVTATPTESKSSEGSSVNVNAHLKQIAQRESGGNIHAVNPTSGAAGKYQFLQSTWDSVAPAKYKGVSPANAPESVQDAAAVKLYNTGGAGHWVTA</sequence>
<gene>
    <name type="primary">sceD</name>
    <name type="ordered locus">SACOL2088</name>
</gene>
<comment type="function">
    <text evidence="1">Is able to cleave peptidoglycan and affects clumping and separation of bacterial cells.</text>
</comment>
<comment type="subcellular location">
    <subcellularLocation>
        <location evidence="5">Secreted</location>
    </subcellularLocation>
</comment>
<comment type="induction">
    <text evidence="3">Positively regulated by sigma B factor.</text>
</comment>
<comment type="similarity">
    <text evidence="4">Belongs to the transglycosylase family. SceD subfamily.</text>
</comment>
<keyword id="KW-0903">Direct protein sequencing</keyword>
<keyword id="KW-0326">Glycosidase</keyword>
<keyword id="KW-0378">Hydrolase</keyword>
<keyword id="KW-0964">Secreted</keyword>
<keyword id="KW-0732">Signal</keyword>
<proteinExistence type="evidence at protein level"/>
<reference key="1">
    <citation type="journal article" date="2005" name="J. Bacteriol.">
        <title>Insights on evolution of virulence and resistance from the complete genome analysis of an early methicillin-resistant Staphylococcus aureus strain and a biofilm-producing methicillin-resistant Staphylococcus epidermidis strain.</title>
        <authorList>
            <person name="Gill S.R."/>
            <person name="Fouts D.E."/>
            <person name="Archer G.L."/>
            <person name="Mongodin E.F."/>
            <person name="DeBoy R.T."/>
            <person name="Ravel J."/>
            <person name="Paulsen I.T."/>
            <person name="Kolonay J.F."/>
            <person name="Brinkac L.M."/>
            <person name="Beanan M.J."/>
            <person name="Dodson R.J."/>
            <person name="Daugherty S.C."/>
            <person name="Madupu R."/>
            <person name="Angiuoli S.V."/>
            <person name="Durkin A.S."/>
            <person name="Haft D.H."/>
            <person name="Vamathevan J.J."/>
            <person name="Khouri H."/>
            <person name="Utterback T.R."/>
            <person name="Lee C."/>
            <person name="Dimitrov G."/>
            <person name="Jiang L."/>
            <person name="Qin H."/>
            <person name="Weidman J."/>
            <person name="Tran K."/>
            <person name="Kang K.H."/>
            <person name="Hance I.R."/>
            <person name="Nelson K.E."/>
            <person name="Fraser C.M."/>
        </authorList>
    </citation>
    <scope>NUCLEOTIDE SEQUENCE [LARGE SCALE GENOMIC DNA]</scope>
    <source>
        <strain>COL</strain>
    </source>
</reference>
<reference key="2">
    <citation type="journal article" date="2001" name="Proteomics">
        <title>Extracellular proteins of Staphylococcus aureus and the role of SarA and sigma B.</title>
        <authorList>
            <person name="Ziebandt A.-K."/>
            <person name="Weber H."/>
            <person name="Rudolph J."/>
            <person name="Schmid R."/>
            <person name="Hoeper D."/>
            <person name="Engelmann S."/>
            <person name="Hecker M."/>
        </authorList>
    </citation>
    <scope>PROTEIN SEQUENCE OF 28-37</scope>
    <scope>SUBCELLULAR LOCATION</scope>
    <scope>INDUCTION</scope>
</reference>
<dbReference type="EC" id="3.2.-.-"/>
<dbReference type="EMBL" id="CP000046">
    <property type="protein sequence ID" value="AAW37049.1"/>
    <property type="molecule type" value="Genomic_DNA"/>
</dbReference>
<dbReference type="RefSeq" id="WP_000752009.1">
    <property type="nucleotide sequence ID" value="NC_002951.2"/>
</dbReference>
<dbReference type="SMR" id="Q5HEA4"/>
<dbReference type="CAZy" id="GH23">
    <property type="family name" value="Glycoside Hydrolase Family 23"/>
</dbReference>
<dbReference type="KEGG" id="sac:SACOL2088"/>
<dbReference type="HOGENOM" id="CLU_099865_0_0_9"/>
<dbReference type="Proteomes" id="UP000000530">
    <property type="component" value="Chromosome"/>
</dbReference>
<dbReference type="GO" id="GO:0005576">
    <property type="term" value="C:extracellular region"/>
    <property type="evidence" value="ECO:0007669"/>
    <property type="project" value="UniProtKB-SubCell"/>
</dbReference>
<dbReference type="GO" id="GO:0016798">
    <property type="term" value="F:hydrolase activity, acting on glycosyl bonds"/>
    <property type="evidence" value="ECO:0007669"/>
    <property type="project" value="UniProtKB-KW"/>
</dbReference>
<dbReference type="CDD" id="cd13925">
    <property type="entry name" value="RPF"/>
    <property type="match status" value="1"/>
</dbReference>
<dbReference type="Gene3D" id="1.10.530.10">
    <property type="match status" value="1"/>
</dbReference>
<dbReference type="InterPro" id="IPR023346">
    <property type="entry name" value="Lysozyme-like_dom_sf"/>
</dbReference>
<dbReference type="InterPro" id="IPR010618">
    <property type="entry name" value="RPF"/>
</dbReference>
<dbReference type="Pfam" id="PF06737">
    <property type="entry name" value="Transglycosylas"/>
    <property type="match status" value="1"/>
</dbReference>
<dbReference type="SUPFAM" id="SSF53955">
    <property type="entry name" value="Lysozyme-like"/>
    <property type="match status" value="1"/>
</dbReference>
<name>SCED_STAAC</name>
<organism>
    <name type="scientific">Staphylococcus aureus (strain COL)</name>
    <dbReference type="NCBI Taxonomy" id="93062"/>
    <lineage>
        <taxon>Bacteria</taxon>
        <taxon>Bacillati</taxon>
        <taxon>Bacillota</taxon>
        <taxon>Bacilli</taxon>
        <taxon>Bacillales</taxon>
        <taxon>Staphylococcaceae</taxon>
        <taxon>Staphylococcus</taxon>
    </lineage>
</organism>
<protein>
    <recommendedName>
        <fullName>Probable transglycosylase SceD</fullName>
        <ecNumber>3.2.-.-</ecNumber>
    </recommendedName>
</protein>
<accession>Q5HEA4</accession>